<dbReference type="EC" id="2.7.1.33" evidence="1"/>
<dbReference type="EMBL" id="AM420293">
    <property type="protein sequence ID" value="CAL99756.1"/>
    <property type="molecule type" value="Genomic_DNA"/>
</dbReference>
<dbReference type="RefSeq" id="WP_009946422.1">
    <property type="nucleotide sequence ID" value="NC_009142.1"/>
</dbReference>
<dbReference type="SMR" id="A4F6T2"/>
<dbReference type="STRING" id="405948.SACE_0408"/>
<dbReference type="KEGG" id="sen:SACE_0408"/>
<dbReference type="eggNOG" id="COG1521">
    <property type="taxonomic scope" value="Bacteria"/>
</dbReference>
<dbReference type="HOGENOM" id="CLU_066627_1_0_11"/>
<dbReference type="OrthoDB" id="9804707at2"/>
<dbReference type="UniPathway" id="UPA00241">
    <property type="reaction ID" value="UER00352"/>
</dbReference>
<dbReference type="Proteomes" id="UP000006728">
    <property type="component" value="Chromosome"/>
</dbReference>
<dbReference type="GO" id="GO:0005737">
    <property type="term" value="C:cytoplasm"/>
    <property type="evidence" value="ECO:0007669"/>
    <property type="project" value="UniProtKB-SubCell"/>
</dbReference>
<dbReference type="GO" id="GO:0005524">
    <property type="term" value="F:ATP binding"/>
    <property type="evidence" value="ECO:0007669"/>
    <property type="project" value="UniProtKB-UniRule"/>
</dbReference>
<dbReference type="GO" id="GO:0046872">
    <property type="term" value="F:metal ion binding"/>
    <property type="evidence" value="ECO:0007669"/>
    <property type="project" value="UniProtKB-KW"/>
</dbReference>
<dbReference type="GO" id="GO:0004594">
    <property type="term" value="F:pantothenate kinase activity"/>
    <property type="evidence" value="ECO:0007669"/>
    <property type="project" value="UniProtKB-UniRule"/>
</dbReference>
<dbReference type="GO" id="GO:0015937">
    <property type="term" value="P:coenzyme A biosynthetic process"/>
    <property type="evidence" value="ECO:0007669"/>
    <property type="project" value="UniProtKB-UniRule"/>
</dbReference>
<dbReference type="CDD" id="cd24015">
    <property type="entry name" value="ASKHA_NBD_PanK-III"/>
    <property type="match status" value="1"/>
</dbReference>
<dbReference type="Gene3D" id="3.30.420.40">
    <property type="match status" value="2"/>
</dbReference>
<dbReference type="HAMAP" id="MF_01274">
    <property type="entry name" value="Pantothen_kinase_3"/>
    <property type="match status" value="1"/>
</dbReference>
<dbReference type="InterPro" id="IPR043129">
    <property type="entry name" value="ATPase_NBD"/>
</dbReference>
<dbReference type="InterPro" id="IPR004619">
    <property type="entry name" value="Type_III_PanK"/>
</dbReference>
<dbReference type="NCBIfam" id="TIGR00671">
    <property type="entry name" value="baf"/>
    <property type="match status" value="1"/>
</dbReference>
<dbReference type="NCBIfam" id="NF009845">
    <property type="entry name" value="PRK13318.1-3"/>
    <property type="match status" value="1"/>
</dbReference>
<dbReference type="NCBIfam" id="NF009855">
    <property type="entry name" value="PRK13321.1"/>
    <property type="match status" value="1"/>
</dbReference>
<dbReference type="PANTHER" id="PTHR34265">
    <property type="entry name" value="TYPE III PANTOTHENATE KINASE"/>
    <property type="match status" value="1"/>
</dbReference>
<dbReference type="PANTHER" id="PTHR34265:SF1">
    <property type="entry name" value="TYPE III PANTOTHENATE KINASE"/>
    <property type="match status" value="1"/>
</dbReference>
<dbReference type="Pfam" id="PF03309">
    <property type="entry name" value="Pan_kinase"/>
    <property type="match status" value="1"/>
</dbReference>
<dbReference type="SUPFAM" id="SSF53067">
    <property type="entry name" value="Actin-like ATPase domain"/>
    <property type="match status" value="2"/>
</dbReference>
<feature type="chain" id="PRO_1000054409" description="Type III pantothenate kinase">
    <location>
        <begin position="1"/>
        <end position="265"/>
    </location>
</feature>
<feature type="active site" description="Proton acceptor" evidence="1">
    <location>
        <position position="114"/>
    </location>
</feature>
<feature type="binding site" evidence="1">
    <location>
        <begin position="6"/>
        <end position="13"/>
    </location>
    <ligand>
        <name>ATP</name>
        <dbReference type="ChEBI" id="CHEBI:30616"/>
    </ligand>
</feature>
<feature type="binding site" evidence="1">
    <location>
        <begin position="112"/>
        <end position="115"/>
    </location>
    <ligand>
        <name>substrate</name>
    </ligand>
</feature>
<feature type="binding site" evidence="1">
    <location>
        <position position="134"/>
    </location>
    <ligand>
        <name>K(+)</name>
        <dbReference type="ChEBI" id="CHEBI:29103"/>
    </ligand>
</feature>
<feature type="binding site" evidence="1">
    <location>
        <position position="137"/>
    </location>
    <ligand>
        <name>ATP</name>
        <dbReference type="ChEBI" id="CHEBI:30616"/>
    </ligand>
</feature>
<feature type="binding site" evidence="1">
    <location>
        <position position="189"/>
    </location>
    <ligand>
        <name>substrate</name>
    </ligand>
</feature>
<name>COAX_SACEN</name>
<protein>
    <recommendedName>
        <fullName evidence="1">Type III pantothenate kinase</fullName>
        <ecNumber evidence="1">2.7.1.33</ecNumber>
    </recommendedName>
    <alternativeName>
        <fullName evidence="1">PanK-III</fullName>
    </alternativeName>
    <alternativeName>
        <fullName evidence="1">Pantothenic acid kinase</fullName>
    </alternativeName>
</protein>
<sequence>MLLAIDVGNTNIVLGLYADEPAEGADPVLVRDWRMRTEPRMTADELALTVRGLLGSYADRITGISALSTVPSLLRELRVMLGRYWTDVPRVVVEPGVRTGVPLLVDNPKEVGADRVINTLAAHHLHATNCVVVDFGTSTNIDAISAKGEFLGGAFAPGIEISLDALASRAAQLRKVELVRPRSVIGKNTVECLQSGILYGFAGQVDGLVRRIVAELESTHGGPTTVIGTGGLAPLVVTESDTISHHVPDLTLLGLRLVYDRNFGS</sequence>
<gene>
    <name evidence="1" type="primary">coaX</name>
    <name type="ordered locus">SACE_0408</name>
</gene>
<organism>
    <name type="scientific">Saccharopolyspora erythraea (strain ATCC 11635 / DSM 40517 / JCM 4748 / NBRC 13426 / NCIMB 8594 / NRRL 2338)</name>
    <dbReference type="NCBI Taxonomy" id="405948"/>
    <lineage>
        <taxon>Bacteria</taxon>
        <taxon>Bacillati</taxon>
        <taxon>Actinomycetota</taxon>
        <taxon>Actinomycetes</taxon>
        <taxon>Pseudonocardiales</taxon>
        <taxon>Pseudonocardiaceae</taxon>
        <taxon>Saccharopolyspora</taxon>
    </lineage>
</organism>
<accession>A4F6T2</accession>
<proteinExistence type="inferred from homology"/>
<comment type="function">
    <text evidence="1">Catalyzes the phosphorylation of pantothenate (Pan), the first step in CoA biosynthesis.</text>
</comment>
<comment type="catalytic activity">
    <reaction evidence="1">
        <text>(R)-pantothenate + ATP = (R)-4'-phosphopantothenate + ADP + H(+)</text>
        <dbReference type="Rhea" id="RHEA:16373"/>
        <dbReference type="ChEBI" id="CHEBI:10986"/>
        <dbReference type="ChEBI" id="CHEBI:15378"/>
        <dbReference type="ChEBI" id="CHEBI:29032"/>
        <dbReference type="ChEBI" id="CHEBI:30616"/>
        <dbReference type="ChEBI" id="CHEBI:456216"/>
        <dbReference type="EC" id="2.7.1.33"/>
    </reaction>
</comment>
<comment type="cofactor">
    <cofactor evidence="1">
        <name>NH4(+)</name>
        <dbReference type="ChEBI" id="CHEBI:28938"/>
    </cofactor>
    <cofactor evidence="1">
        <name>K(+)</name>
        <dbReference type="ChEBI" id="CHEBI:29103"/>
    </cofactor>
    <text evidence="1">A monovalent cation. Ammonium or potassium.</text>
</comment>
<comment type="pathway">
    <text evidence="1">Cofactor biosynthesis; coenzyme A biosynthesis; CoA from (R)-pantothenate: step 1/5.</text>
</comment>
<comment type="subunit">
    <text evidence="1">Homodimer.</text>
</comment>
<comment type="subcellular location">
    <subcellularLocation>
        <location evidence="1">Cytoplasm</location>
    </subcellularLocation>
</comment>
<comment type="similarity">
    <text evidence="1">Belongs to the type III pantothenate kinase family.</text>
</comment>
<evidence type="ECO:0000255" key="1">
    <source>
        <dbReference type="HAMAP-Rule" id="MF_01274"/>
    </source>
</evidence>
<reference key="1">
    <citation type="journal article" date="2007" name="Nat. Biotechnol.">
        <title>Complete genome sequence of the erythromycin-producing bacterium Saccharopolyspora erythraea NRRL23338.</title>
        <authorList>
            <person name="Oliynyk M."/>
            <person name="Samborskyy M."/>
            <person name="Lester J.B."/>
            <person name="Mironenko T."/>
            <person name="Scott N."/>
            <person name="Dickens S."/>
            <person name="Haydock S.F."/>
            <person name="Leadlay P.F."/>
        </authorList>
    </citation>
    <scope>NUCLEOTIDE SEQUENCE [LARGE SCALE GENOMIC DNA]</scope>
    <source>
        <strain>ATCC 11635 / DSM 40517 / JCM 4748 / NBRC 13426 / NCIMB 8594 / NRRL 2338</strain>
    </source>
</reference>
<keyword id="KW-0067">ATP-binding</keyword>
<keyword id="KW-0173">Coenzyme A biosynthesis</keyword>
<keyword id="KW-0963">Cytoplasm</keyword>
<keyword id="KW-0418">Kinase</keyword>
<keyword id="KW-0479">Metal-binding</keyword>
<keyword id="KW-0547">Nucleotide-binding</keyword>
<keyword id="KW-0630">Potassium</keyword>
<keyword id="KW-1185">Reference proteome</keyword>
<keyword id="KW-0808">Transferase</keyword>